<evidence type="ECO:0000255" key="1"/>
<evidence type="ECO:0000256" key="2">
    <source>
        <dbReference type="SAM" id="MobiDB-lite"/>
    </source>
</evidence>
<evidence type="ECO:0000269" key="3">
    <source>
    </source>
</evidence>
<accession>Q9US11</accession>
<organism>
    <name type="scientific">Schizosaccharomyces pombe (strain 972 / ATCC 24843)</name>
    <name type="common">Fission yeast</name>
    <dbReference type="NCBI Taxonomy" id="284812"/>
    <lineage>
        <taxon>Eukaryota</taxon>
        <taxon>Fungi</taxon>
        <taxon>Dikarya</taxon>
        <taxon>Ascomycota</taxon>
        <taxon>Taphrinomycotina</taxon>
        <taxon>Schizosaccharomycetes</taxon>
        <taxon>Schizosaccharomycetales</taxon>
        <taxon>Schizosaccharomycetaceae</taxon>
        <taxon>Schizosaccharomyces</taxon>
    </lineage>
</organism>
<dbReference type="EMBL" id="CU329670">
    <property type="protein sequence ID" value="CAB63794.1"/>
    <property type="molecule type" value="Genomic_DNA"/>
</dbReference>
<dbReference type="PIR" id="T50227">
    <property type="entry name" value="T50227"/>
</dbReference>
<dbReference type="RefSeq" id="NP_593596.1">
    <property type="nucleotide sequence ID" value="NM_001019027.2"/>
</dbReference>
<dbReference type="SMR" id="Q9US11"/>
<dbReference type="BioGRID" id="279589">
    <property type="interactions" value="2"/>
</dbReference>
<dbReference type="iPTMnet" id="Q9US11"/>
<dbReference type="PaxDb" id="4896-SPAC607.07c.1"/>
<dbReference type="EnsemblFungi" id="SPAC607.07c.1">
    <property type="protein sequence ID" value="SPAC607.07c.1:pep"/>
    <property type="gene ID" value="SPAC607.07c"/>
</dbReference>
<dbReference type="KEGG" id="spo:2543158"/>
<dbReference type="PomBase" id="SPAC607.07c"/>
<dbReference type="VEuPathDB" id="FungiDB:SPAC607.07c"/>
<dbReference type="HOGENOM" id="CLU_1836306_0_0_1"/>
<dbReference type="InParanoid" id="Q9US11"/>
<dbReference type="OMA" id="DADDMWD"/>
<dbReference type="PRO" id="PR:Q9US11"/>
<dbReference type="Proteomes" id="UP000002485">
    <property type="component" value="Chromosome I"/>
</dbReference>
<dbReference type="GO" id="GO:0005794">
    <property type="term" value="C:Golgi apparatus"/>
    <property type="evidence" value="ECO:0007005"/>
    <property type="project" value="PomBase"/>
</dbReference>
<dbReference type="GO" id="GO:0000139">
    <property type="term" value="C:Golgi membrane"/>
    <property type="evidence" value="ECO:0007669"/>
    <property type="project" value="UniProtKB-SubCell"/>
</dbReference>
<sequence length="143" mass="15805">MGTFGIVALSIICSIAFLFVAYGVLRLINSIRRRNMMTADVSSVKSSQTWNFLKNPFSNSAKFEALDADDMWDTRVEEAELNTIPSASPFIDHTSETVPFVNTEAPPPRLSSSFSRQSGENAETQSQVSASPFNDKNSPYVQE</sequence>
<protein>
    <recommendedName>
        <fullName>Uncharacterized protein C607.07c</fullName>
    </recommendedName>
</protein>
<comment type="subcellular location">
    <subcellularLocation>
        <location evidence="3">Golgi apparatus membrane</location>
        <topology evidence="3">Single-pass membrane protein</topology>
    </subcellularLocation>
</comment>
<proteinExistence type="predicted"/>
<feature type="chain" id="PRO_0000304113" description="Uncharacterized protein C607.07c">
    <location>
        <begin position="1"/>
        <end position="143"/>
    </location>
</feature>
<feature type="transmembrane region" description="Helical" evidence="1">
    <location>
        <begin position="4"/>
        <end position="24"/>
    </location>
</feature>
<feature type="region of interest" description="Disordered" evidence="2">
    <location>
        <begin position="97"/>
        <end position="143"/>
    </location>
</feature>
<feature type="compositionally biased region" description="Polar residues" evidence="2">
    <location>
        <begin position="110"/>
        <end position="143"/>
    </location>
</feature>
<reference key="1">
    <citation type="journal article" date="2002" name="Nature">
        <title>The genome sequence of Schizosaccharomyces pombe.</title>
        <authorList>
            <person name="Wood V."/>
            <person name="Gwilliam R."/>
            <person name="Rajandream M.A."/>
            <person name="Lyne M.H."/>
            <person name="Lyne R."/>
            <person name="Stewart A."/>
            <person name="Sgouros J.G."/>
            <person name="Peat N."/>
            <person name="Hayles J."/>
            <person name="Baker S.G."/>
            <person name="Basham D."/>
            <person name="Bowman S."/>
            <person name="Brooks K."/>
            <person name="Brown D."/>
            <person name="Brown S."/>
            <person name="Chillingworth T."/>
            <person name="Churcher C.M."/>
            <person name="Collins M."/>
            <person name="Connor R."/>
            <person name="Cronin A."/>
            <person name="Davis P."/>
            <person name="Feltwell T."/>
            <person name="Fraser A."/>
            <person name="Gentles S."/>
            <person name="Goble A."/>
            <person name="Hamlin N."/>
            <person name="Harris D.E."/>
            <person name="Hidalgo J."/>
            <person name="Hodgson G."/>
            <person name="Holroyd S."/>
            <person name="Hornsby T."/>
            <person name="Howarth S."/>
            <person name="Huckle E.J."/>
            <person name="Hunt S."/>
            <person name="Jagels K."/>
            <person name="James K.D."/>
            <person name="Jones L."/>
            <person name="Jones M."/>
            <person name="Leather S."/>
            <person name="McDonald S."/>
            <person name="McLean J."/>
            <person name="Mooney P."/>
            <person name="Moule S."/>
            <person name="Mungall K.L."/>
            <person name="Murphy L.D."/>
            <person name="Niblett D."/>
            <person name="Odell C."/>
            <person name="Oliver K."/>
            <person name="O'Neil S."/>
            <person name="Pearson D."/>
            <person name="Quail M.A."/>
            <person name="Rabbinowitsch E."/>
            <person name="Rutherford K.M."/>
            <person name="Rutter S."/>
            <person name="Saunders D."/>
            <person name="Seeger K."/>
            <person name="Sharp S."/>
            <person name="Skelton J."/>
            <person name="Simmonds M.N."/>
            <person name="Squares R."/>
            <person name="Squares S."/>
            <person name="Stevens K."/>
            <person name="Taylor K."/>
            <person name="Taylor R.G."/>
            <person name="Tivey A."/>
            <person name="Walsh S.V."/>
            <person name="Warren T."/>
            <person name="Whitehead S."/>
            <person name="Woodward J.R."/>
            <person name="Volckaert G."/>
            <person name="Aert R."/>
            <person name="Robben J."/>
            <person name="Grymonprez B."/>
            <person name="Weltjens I."/>
            <person name="Vanstreels E."/>
            <person name="Rieger M."/>
            <person name="Schaefer M."/>
            <person name="Mueller-Auer S."/>
            <person name="Gabel C."/>
            <person name="Fuchs M."/>
            <person name="Duesterhoeft A."/>
            <person name="Fritzc C."/>
            <person name="Holzer E."/>
            <person name="Moestl D."/>
            <person name="Hilbert H."/>
            <person name="Borzym K."/>
            <person name="Langer I."/>
            <person name="Beck A."/>
            <person name="Lehrach H."/>
            <person name="Reinhardt R."/>
            <person name="Pohl T.M."/>
            <person name="Eger P."/>
            <person name="Zimmermann W."/>
            <person name="Wedler H."/>
            <person name="Wambutt R."/>
            <person name="Purnelle B."/>
            <person name="Goffeau A."/>
            <person name="Cadieu E."/>
            <person name="Dreano S."/>
            <person name="Gloux S."/>
            <person name="Lelaure V."/>
            <person name="Mottier S."/>
            <person name="Galibert F."/>
            <person name="Aves S.J."/>
            <person name="Xiang Z."/>
            <person name="Hunt C."/>
            <person name="Moore K."/>
            <person name="Hurst S.M."/>
            <person name="Lucas M."/>
            <person name="Rochet M."/>
            <person name="Gaillardin C."/>
            <person name="Tallada V.A."/>
            <person name="Garzon A."/>
            <person name="Thode G."/>
            <person name="Daga R.R."/>
            <person name="Cruzado L."/>
            <person name="Jimenez J."/>
            <person name="Sanchez M."/>
            <person name="del Rey F."/>
            <person name="Benito J."/>
            <person name="Dominguez A."/>
            <person name="Revuelta J.L."/>
            <person name="Moreno S."/>
            <person name="Armstrong J."/>
            <person name="Forsburg S.L."/>
            <person name="Cerutti L."/>
            <person name="Lowe T."/>
            <person name="McCombie W.R."/>
            <person name="Paulsen I."/>
            <person name="Potashkin J."/>
            <person name="Shpakovski G.V."/>
            <person name="Ussery D."/>
            <person name="Barrell B.G."/>
            <person name="Nurse P."/>
        </authorList>
    </citation>
    <scope>NUCLEOTIDE SEQUENCE [LARGE SCALE GENOMIC DNA]</scope>
    <source>
        <strain>972 / ATCC 24843</strain>
    </source>
</reference>
<reference key="2">
    <citation type="journal article" date="2006" name="Nat. Biotechnol.">
        <title>ORFeome cloning and global analysis of protein localization in the fission yeast Schizosaccharomyces pombe.</title>
        <authorList>
            <person name="Matsuyama A."/>
            <person name="Arai R."/>
            <person name="Yashiroda Y."/>
            <person name="Shirai A."/>
            <person name="Kamata A."/>
            <person name="Sekido S."/>
            <person name="Kobayashi Y."/>
            <person name="Hashimoto A."/>
            <person name="Hamamoto M."/>
            <person name="Hiraoka Y."/>
            <person name="Horinouchi S."/>
            <person name="Yoshida M."/>
        </authorList>
    </citation>
    <scope>SUBCELLULAR LOCATION [LARGE SCALE ANALYSIS]</scope>
</reference>
<keyword id="KW-0333">Golgi apparatus</keyword>
<keyword id="KW-0472">Membrane</keyword>
<keyword id="KW-1185">Reference proteome</keyword>
<keyword id="KW-0812">Transmembrane</keyword>
<keyword id="KW-1133">Transmembrane helix</keyword>
<gene>
    <name type="ORF">SPAC607.07c</name>
</gene>
<name>YK67_SCHPO</name>